<gene>
    <name evidence="1" type="primary">smpB</name>
    <name type="ordered locus">SARI_00240</name>
</gene>
<protein>
    <recommendedName>
        <fullName evidence="1">SsrA-binding protein</fullName>
    </recommendedName>
    <alternativeName>
        <fullName evidence="1">Small protein B</fullName>
    </alternativeName>
</protein>
<reference key="1">
    <citation type="submission" date="2007-11" db="EMBL/GenBank/DDBJ databases">
        <authorList>
            <consortium name="The Salmonella enterica serovar Arizonae Genome Sequencing Project"/>
            <person name="McClelland M."/>
            <person name="Sanderson E.K."/>
            <person name="Porwollik S."/>
            <person name="Spieth J."/>
            <person name="Clifton W.S."/>
            <person name="Fulton R."/>
            <person name="Chunyan W."/>
            <person name="Wollam A."/>
            <person name="Shah N."/>
            <person name="Pepin K."/>
            <person name="Bhonagiri V."/>
            <person name="Nash W."/>
            <person name="Johnson M."/>
            <person name="Thiruvilangam P."/>
            <person name="Wilson R."/>
        </authorList>
    </citation>
    <scope>NUCLEOTIDE SEQUENCE [LARGE SCALE GENOMIC DNA]</scope>
    <source>
        <strain>ATCC BAA-731 / CDC346-86 / RSK2980</strain>
    </source>
</reference>
<evidence type="ECO:0000255" key="1">
    <source>
        <dbReference type="HAMAP-Rule" id="MF_00023"/>
    </source>
</evidence>
<evidence type="ECO:0000305" key="2"/>
<name>SSRP_SALAR</name>
<organism>
    <name type="scientific">Salmonella arizonae (strain ATCC BAA-731 / CDC346-86 / RSK2980)</name>
    <dbReference type="NCBI Taxonomy" id="41514"/>
    <lineage>
        <taxon>Bacteria</taxon>
        <taxon>Pseudomonadati</taxon>
        <taxon>Pseudomonadota</taxon>
        <taxon>Gammaproteobacteria</taxon>
        <taxon>Enterobacterales</taxon>
        <taxon>Enterobacteriaceae</taxon>
        <taxon>Salmonella</taxon>
    </lineage>
</organism>
<dbReference type="EMBL" id="CP000880">
    <property type="protein sequence ID" value="ABX20186.1"/>
    <property type="status" value="ALT_INIT"/>
    <property type="molecule type" value="Genomic_DNA"/>
</dbReference>
<dbReference type="SMR" id="A9MGS5"/>
<dbReference type="STRING" id="41514.SARI_00240"/>
<dbReference type="KEGG" id="ses:SARI_00240"/>
<dbReference type="HOGENOM" id="CLU_108953_3_0_6"/>
<dbReference type="Proteomes" id="UP000002084">
    <property type="component" value="Chromosome"/>
</dbReference>
<dbReference type="GO" id="GO:0005829">
    <property type="term" value="C:cytosol"/>
    <property type="evidence" value="ECO:0007669"/>
    <property type="project" value="TreeGrafter"/>
</dbReference>
<dbReference type="GO" id="GO:0003723">
    <property type="term" value="F:RNA binding"/>
    <property type="evidence" value="ECO:0007669"/>
    <property type="project" value="UniProtKB-UniRule"/>
</dbReference>
<dbReference type="GO" id="GO:0070929">
    <property type="term" value="P:trans-translation"/>
    <property type="evidence" value="ECO:0007669"/>
    <property type="project" value="UniProtKB-UniRule"/>
</dbReference>
<dbReference type="CDD" id="cd09294">
    <property type="entry name" value="SmpB"/>
    <property type="match status" value="1"/>
</dbReference>
<dbReference type="FunFam" id="2.40.280.10:FF:000001">
    <property type="entry name" value="SsrA-binding protein"/>
    <property type="match status" value="1"/>
</dbReference>
<dbReference type="Gene3D" id="2.40.280.10">
    <property type="match status" value="1"/>
</dbReference>
<dbReference type="HAMAP" id="MF_00023">
    <property type="entry name" value="SmpB"/>
    <property type="match status" value="1"/>
</dbReference>
<dbReference type="InterPro" id="IPR023620">
    <property type="entry name" value="SmpB"/>
</dbReference>
<dbReference type="InterPro" id="IPR000037">
    <property type="entry name" value="SsrA-bd_prot"/>
</dbReference>
<dbReference type="InterPro" id="IPR020081">
    <property type="entry name" value="SsrA-bd_prot_CS"/>
</dbReference>
<dbReference type="NCBIfam" id="NF003843">
    <property type="entry name" value="PRK05422.1"/>
    <property type="match status" value="1"/>
</dbReference>
<dbReference type="NCBIfam" id="TIGR00086">
    <property type="entry name" value="smpB"/>
    <property type="match status" value="1"/>
</dbReference>
<dbReference type="PANTHER" id="PTHR30308:SF2">
    <property type="entry name" value="SSRA-BINDING PROTEIN"/>
    <property type="match status" value="1"/>
</dbReference>
<dbReference type="PANTHER" id="PTHR30308">
    <property type="entry name" value="TMRNA-BINDING COMPONENT OF TRANS-TRANSLATION TAGGING COMPLEX"/>
    <property type="match status" value="1"/>
</dbReference>
<dbReference type="Pfam" id="PF01668">
    <property type="entry name" value="SmpB"/>
    <property type="match status" value="1"/>
</dbReference>
<dbReference type="SUPFAM" id="SSF74982">
    <property type="entry name" value="Small protein B (SmpB)"/>
    <property type="match status" value="1"/>
</dbReference>
<dbReference type="PROSITE" id="PS01317">
    <property type="entry name" value="SSRP"/>
    <property type="match status" value="1"/>
</dbReference>
<sequence>MTKKKAHKPGSATIALNKRARHEYFIEEEFEAGLALQGWEVKSLRAGKANIGDSYVILKDGEAWLFGANFTPMAVASTHVVCDPTRTRKLLLNQRELDSLYGRINREGYTVVALSLYWKNAWCKVKIGVAKGKKQHDKRSDLKEREWQLDKARIMKHAGR</sequence>
<feature type="chain" id="PRO_0000331093" description="SsrA-binding protein">
    <location>
        <begin position="1"/>
        <end position="160"/>
    </location>
</feature>
<proteinExistence type="inferred from homology"/>
<comment type="function">
    <text evidence="1">Required for rescue of stalled ribosomes mediated by trans-translation. Binds to transfer-messenger RNA (tmRNA), required for stable association of tmRNA with ribosomes. tmRNA and SmpB together mimic tRNA shape, replacing the anticodon stem-loop with SmpB. tmRNA is encoded by the ssrA gene; the 2 termini fold to resemble tRNA(Ala) and it encodes a 'tag peptide', a short internal open reading frame. During trans-translation Ala-aminoacylated tmRNA acts like a tRNA, entering the A-site of stalled ribosomes, displacing the stalled mRNA. The ribosome then switches to translate the ORF on the tmRNA; the nascent peptide is terminated with the 'tag peptide' encoded by the tmRNA and targeted for degradation. The ribosome is freed to recommence translation, which seems to be the essential function of trans-translation.</text>
</comment>
<comment type="subcellular location">
    <subcellularLocation>
        <location evidence="1">Cytoplasm</location>
    </subcellularLocation>
    <text evidence="1">The tmRNA-SmpB complex associates with stalled 70S ribosomes.</text>
</comment>
<comment type="similarity">
    <text evidence="1">Belongs to the SmpB family.</text>
</comment>
<comment type="sequence caution" evidence="2">
    <conflict type="erroneous initiation">
        <sequence resource="EMBL-CDS" id="ABX20186"/>
    </conflict>
    <text>Extended N-terminus.</text>
</comment>
<keyword id="KW-0963">Cytoplasm</keyword>
<keyword id="KW-1185">Reference proteome</keyword>
<keyword id="KW-0694">RNA-binding</keyword>
<accession>A9MGS5</accession>